<proteinExistence type="inferred from homology"/>
<dbReference type="EC" id="3.1.-.-" evidence="1"/>
<dbReference type="EMBL" id="CP001157">
    <property type="protein sequence ID" value="ACO76574.1"/>
    <property type="molecule type" value="Genomic_DNA"/>
</dbReference>
<dbReference type="RefSeq" id="WP_012699002.1">
    <property type="nucleotide sequence ID" value="NC_012560.1"/>
</dbReference>
<dbReference type="SMR" id="C1DI77"/>
<dbReference type="STRING" id="322710.Avin_03140"/>
<dbReference type="EnsemblBacteria" id="ACO76574">
    <property type="protein sequence ID" value="ACO76574"/>
    <property type="gene ID" value="Avin_03140"/>
</dbReference>
<dbReference type="GeneID" id="88183767"/>
<dbReference type="KEGG" id="avn:Avin_03140"/>
<dbReference type="eggNOG" id="COG0816">
    <property type="taxonomic scope" value="Bacteria"/>
</dbReference>
<dbReference type="HOGENOM" id="CLU_098240_3_0_6"/>
<dbReference type="OrthoDB" id="9796140at2"/>
<dbReference type="Proteomes" id="UP000002424">
    <property type="component" value="Chromosome"/>
</dbReference>
<dbReference type="GO" id="GO:0005829">
    <property type="term" value="C:cytosol"/>
    <property type="evidence" value="ECO:0007669"/>
    <property type="project" value="TreeGrafter"/>
</dbReference>
<dbReference type="GO" id="GO:0004518">
    <property type="term" value="F:nuclease activity"/>
    <property type="evidence" value="ECO:0007669"/>
    <property type="project" value="UniProtKB-KW"/>
</dbReference>
<dbReference type="GO" id="GO:0000967">
    <property type="term" value="P:rRNA 5'-end processing"/>
    <property type="evidence" value="ECO:0007669"/>
    <property type="project" value="UniProtKB-UniRule"/>
</dbReference>
<dbReference type="CDD" id="cd16964">
    <property type="entry name" value="YqgF"/>
    <property type="match status" value="1"/>
</dbReference>
<dbReference type="FunFam" id="3.30.420.140:FF:000002">
    <property type="entry name" value="Putative pre-16S rRNA nuclease"/>
    <property type="match status" value="1"/>
</dbReference>
<dbReference type="Gene3D" id="3.30.420.140">
    <property type="entry name" value="YqgF/RNase H-like domain"/>
    <property type="match status" value="1"/>
</dbReference>
<dbReference type="HAMAP" id="MF_00651">
    <property type="entry name" value="Nuclease_YqgF"/>
    <property type="match status" value="1"/>
</dbReference>
<dbReference type="InterPro" id="IPR012337">
    <property type="entry name" value="RNaseH-like_sf"/>
</dbReference>
<dbReference type="InterPro" id="IPR005227">
    <property type="entry name" value="YqgF"/>
</dbReference>
<dbReference type="InterPro" id="IPR006641">
    <property type="entry name" value="YqgF/RNaseH-like_dom"/>
</dbReference>
<dbReference type="InterPro" id="IPR037027">
    <property type="entry name" value="YqgF/RNaseH-like_dom_sf"/>
</dbReference>
<dbReference type="NCBIfam" id="TIGR00250">
    <property type="entry name" value="RNAse_H_YqgF"/>
    <property type="match status" value="1"/>
</dbReference>
<dbReference type="PANTHER" id="PTHR33317">
    <property type="entry name" value="POLYNUCLEOTIDYL TRANSFERASE, RIBONUCLEASE H-LIKE SUPERFAMILY PROTEIN"/>
    <property type="match status" value="1"/>
</dbReference>
<dbReference type="PANTHER" id="PTHR33317:SF4">
    <property type="entry name" value="POLYNUCLEOTIDYL TRANSFERASE, RIBONUCLEASE H-LIKE SUPERFAMILY PROTEIN"/>
    <property type="match status" value="1"/>
</dbReference>
<dbReference type="Pfam" id="PF03652">
    <property type="entry name" value="RuvX"/>
    <property type="match status" value="1"/>
</dbReference>
<dbReference type="SMART" id="SM00732">
    <property type="entry name" value="YqgFc"/>
    <property type="match status" value="1"/>
</dbReference>
<dbReference type="SUPFAM" id="SSF53098">
    <property type="entry name" value="Ribonuclease H-like"/>
    <property type="match status" value="1"/>
</dbReference>
<name>YQGF_AZOVD</name>
<reference key="1">
    <citation type="journal article" date="2009" name="J. Bacteriol.">
        <title>Genome sequence of Azotobacter vinelandii, an obligate aerobe specialized to support diverse anaerobic metabolic processes.</title>
        <authorList>
            <person name="Setubal J.C."/>
            <person name="Dos Santos P."/>
            <person name="Goldman B.S."/>
            <person name="Ertesvaag H."/>
            <person name="Espin G."/>
            <person name="Rubio L.M."/>
            <person name="Valla S."/>
            <person name="Almeida N.F."/>
            <person name="Balasubramanian D."/>
            <person name="Cromes L."/>
            <person name="Curatti L."/>
            <person name="Du Z."/>
            <person name="Godsy E."/>
            <person name="Goodner B."/>
            <person name="Hellner-Burris K."/>
            <person name="Hernandez J.A."/>
            <person name="Houmiel K."/>
            <person name="Imperial J."/>
            <person name="Kennedy C."/>
            <person name="Larson T.J."/>
            <person name="Latreille P."/>
            <person name="Ligon L.S."/>
            <person name="Lu J."/>
            <person name="Maerk M."/>
            <person name="Miller N.M."/>
            <person name="Norton S."/>
            <person name="O'Carroll I.P."/>
            <person name="Paulsen I."/>
            <person name="Raulfs E.C."/>
            <person name="Roemer R."/>
            <person name="Rosser J."/>
            <person name="Segura D."/>
            <person name="Slater S."/>
            <person name="Stricklin S.L."/>
            <person name="Studholme D.J."/>
            <person name="Sun J."/>
            <person name="Viana C.J."/>
            <person name="Wallin E."/>
            <person name="Wang B."/>
            <person name="Wheeler C."/>
            <person name="Zhu H."/>
            <person name="Dean D.R."/>
            <person name="Dixon R."/>
            <person name="Wood D."/>
        </authorList>
    </citation>
    <scope>NUCLEOTIDE SEQUENCE [LARGE SCALE GENOMIC DNA]</scope>
    <source>
        <strain>DJ / ATCC BAA-1303</strain>
    </source>
</reference>
<protein>
    <recommendedName>
        <fullName evidence="1">Putative pre-16S rRNA nuclease</fullName>
        <ecNumber evidence="1">3.1.-.-</ecNumber>
    </recommendedName>
</protein>
<accession>C1DI77</accession>
<keyword id="KW-0963">Cytoplasm</keyword>
<keyword id="KW-0378">Hydrolase</keyword>
<keyword id="KW-0540">Nuclease</keyword>
<keyword id="KW-0690">Ribosome biogenesis</keyword>
<comment type="function">
    <text evidence="1">Could be a nuclease involved in processing of the 5'-end of pre-16S rRNA.</text>
</comment>
<comment type="subcellular location">
    <subcellularLocation>
        <location evidence="1">Cytoplasm</location>
    </subcellularLocation>
</comment>
<comment type="similarity">
    <text evidence="1">Belongs to the YqgF nuclease family.</text>
</comment>
<sequence>MSGPRLLLGFDYGTRQIGVAVGQAITGQARELCVLKAQNGVPDWSRVEQLVKEWRPDAMVVGLPLNMDGTPSEMSERAERFARRLHGRFGLPVHTHDERLTTFEAKGYRLAQGQRDGYRRRPVDALAAALLLEGWLAERPAG</sequence>
<evidence type="ECO:0000255" key="1">
    <source>
        <dbReference type="HAMAP-Rule" id="MF_00651"/>
    </source>
</evidence>
<organism>
    <name type="scientific">Azotobacter vinelandii (strain DJ / ATCC BAA-1303)</name>
    <dbReference type="NCBI Taxonomy" id="322710"/>
    <lineage>
        <taxon>Bacteria</taxon>
        <taxon>Pseudomonadati</taxon>
        <taxon>Pseudomonadota</taxon>
        <taxon>Gammaproteobacteria</taxon>
        <taxon>Pseudomonadales</taxon>
        <taxon>Pseudomonadaceae</taxon>
        <taxon>Azotobacter</taxon>
    </lineage>
</organism>
<gene>
    <name type="ordered locus">Avin_03140</name>
</gene>
<feature type="chain" id="PRO_1000212405" description="Putative pre-16S rRNA nuclease">
    <location>
        <begin position="1"/>
        <end position="142"/>
    </location>
</feature>